<name>METXS_MAGMM</name>
<reference key="1">
    <citation type="journal article" date="2009" name="Appl. Environ. Microbiol.">
        <title>Complete genome sequence of the chemolithoautotrophic marine magnetotactic coccus strain MC-1.</title>
        <authorList>
            <person name="Schubbe S."/>
            <person name="Williams T.J."/>
            <person name="Xie G."/>
            <person name="Kiss H.E."/>
            <person name="Brettin T.S."/>
            <person name="Martinez D."/>
            <person name="Ross C.A."/>
            <person name="Schuler D."/>
            <person name="Cox B.L."/>
            <person name="Nealson K.H."/>
            <person name="Bazylinski D.A."/>
        </authorList>
    </citation>
    <scope>NUCLEOTIDE SEQUENCE [LARGE SCALE GENOMIC DNA]</scope>
    <source>
        <strain>ATCC BAA-1437 / JCM 17883 / MC-1</strain>
    </source>
</reference>
<organism>
    <name type="scientific">Magnetococcus marinus (strain ATCC BAA-1437 / JCM 17883 / MC-1)</name>
    <dbReference type="NCBI Taxonomy" id="156889"/>
    <lineage>
        <taxon>Bacteria</taxon>
        <taxon>Pseudomonadati</taxon>
        <taxon>Pseudomonadota</taxon>
        <taxon>Alphaproteobacteria</taxon>
        <taxon>Magnetococcales</taxon>
        <taxon>Magnetococcaceae</taxon>
        <taxon>Magnetococcus</taxon>
    </lineage>
</organism>
<proteinExistence type="inferred from homology"/>
<evidence type="ECO:0000255" key="1">
    <source>
        <dbReference type="HAMAP-Rule" id="MF_00296"/>
    </source>
</evidence>
<sequence>MTHEPLTASVGIVTPQHVRLFGASTPLQLDGGTLLHSVDVSYETYGTLNQERSNAVLICHALSGNAHAAGYHSKDDKRPGWWDHYIGPGKPFDTNRYFVIASNNLGGCDGTTGPSSIDPATGMPYGLNFPMITIGDIVRVQHALVRQLGIERLMAVVGGSMGGMQALQWALDYPHMVPASVIIAAAPRLTAQNIAFNAVARQAIMADPHFNGGDYYTLPGDPTTKARPESGLALARMMAHITYLSEQGLHERFGRRLQDRDALSYGFETDFAVESYLSYQGSSFVKRFDANSYLYITKAMDYFDPFPDAETTVQRLTGVESHFLVMSFDTDWRFDTSRSKELVRILHRSLKDCTFQEFSSPAGHDAFLLPHPSYEKSLGSFLLRTWQSITGGQA</sequence>
<keyword id="KW-0012">Acyltransferase</keyword>
<keyword id="KW-0028">Amino-acid biosynthesis</keyword>
<keyword id="KW-0963">Cytoplasm</keyword>
<keyword id="KW-0486">Methionine biosynthesis</keyword>
<keyword id="KW-1185">Reference proteome</keyword>
<keyword id="KW-0808">Transferase</keyword>
<gene>
    <name evidence="1" type="primary">metXS</name>
    <name type="ordered locus">Mmc1_3190</name>
</gene>
<dbReference type="EC" id="2.3.1.46" evidence="1"/>
<dbReference type="EMBL" id="CP000471">
    <property type="protein sequence ID" value="ABK45680.1"/>
    <property type="molecule type" value="Genomic_DNA"/>
</dbReference>
<dbReference type="RefSeq" id="WP_011714743.1">
    <property type="nucleotide sequence ID" value="NC_008576.1"/>
</dbReference>
<dbReference type="SMR" id="A0LCI7"/>
<dbReference type="STRING" id="156889.Mmc1_3190"/>
<dbReference type="ESTHER" id="magsm-metx">
    <property type="family name" value="Homoserine_transacetylase"/>
</dbReference>
<dbReference type="KEGG" id="mgm:Mmc1_3190"/>
<dbReference type="eggNOG" id="COG2021">
    <property type="taxonomic scope" value="Bacteria"/>
</dbReference>
<dbReference type="HOGENOM" id="CLU_028760_1_2_5"/>
<dbReference type="OrthoDB" id="9800754at2"/>
<dbReference type="UniPathway" id="UPA00051">
    <property type="reaction ID" value="UER00075"/>
</dbReference>
<dbReference type="Proteomes" id="UP000002586">
    <property type="component" value="Chromosome"/>
</dbReference>
<dbReference type="GO" id="GO:0005737">
    <property type="term" value="C:cytoplasm"/>
    <property type="evidence" value="ECO:0007669"/>
    <property type="project" value="UniProtKB-SubCell"/>
</dbReference>
<dbReference type="GO" id="GO:0004414">
    <property type="term" value="F:homoserine O-acetyltransferase activity"/>
    <property type="evidence" value="ECO:0007669"/>
    <property type="project" value="TreeGrafter"/>
</dbReference>
<dbReference type="GO" id="GO:0008899">
    <property type="term" value="F:homoserine O-succinyltransferase activity"/>
    <property type="evidence" value="ECO:0007669"/>
    <property type="project" value="UniProtKB-UniRule"/>
</dbReference>
<dbReference type="GO" id="GO:0009092">
    <property type="term" value="P:homoserine metabolic process"/>
    <property type="evidence" value="ECO:0007669"/>
    <property type="project" value="TreeGrafter"/>
</dbReference>
<dbReference type="GO" id="GO:0009086">
    <property type="term" value="P:methionine biosynthetic process"/>
    <property type="evidence" value="ECO:0007669"/>
    <property type="project" value="UniProtKB-UniRule"/>
</dbReference>
<dbReference type="FunFam" id="1.10.1740.110:FF:000001">
    <property type="entry name" value="Homoserine O-acetyltransferase"/>
    <property type="match status" value="1"/>
</dbReference>
<dbReference type="Gene3D" id="1.10.1740.110">
    <property type="match status" value="1"/>
</dbReference>
<dbReference type="Gene3D" id="3.40.50.1820">
    <property type="entry name" value="alpha/beta hydrolase"/>
    <property type="match status" value="1"/>
</dbReference>
<dbReference type="HAMAP" id="MF_00296">
    <property type="entry name" value="MetX_acyltransf"/>
    <property type="match status" value="1"/>
</dbReference>
<dbReference type="InterPro" id="IPR000073">
    <property type="entry name" value="AB_hydrolase_1"/>
</dbReference>
<dbReference type="InterPro" id="IPR029058">
    <property type="entry name" value="AB_hydrolase_fold"/>
</dbReference>
<dbReference type="InterPro" id="IPR008220">
    <property type="entry name" value="HAT_MetX-like"/>
</dbReference>
<dbReference type="NCBIfam" id="TIGR01392">
    <property type="entry name" value="homoserO_Ac_trn"/>
    <property type="match status" value="1"/>
</dbReference>
<dbReference type="NCBIfam" id="NF001209">
    <property type="entry name" value="PRK00175.1"/>
    <property type="match status" value="1"/>
</dbReference>
<dbReference type="PANTHER" id="PTHR32268">
    <property type="entry name" value="HOMOSERINE O-ACETYLTRANSFERASE"/>
    <property type="match status" value="1"/>
</dbReference>
<dbReference type="PANTHER" id="PTHR32268:SF11">
    <property type="entry name" value="HOMOSERINE O-ACETYLTRANSFERASE"/>
    <property type="match status" value="1"/>
</dbReference>
<dbReference type="Pfam" id="PF00561">
    <property type="entry name" value="Abhydrolase_1"/>
    <property type="match status" value="1"/>
</dbReference>
<dbReference type="PIRSF" id="PIRSF000443">
    <property type="entry name" value="Homoser_Ac_trans"/>
    <property type="match status" value="1"/>
</dbReference>
<dbReference type="SUPFAM" id="SSF53474">
    <property type="entry name" value="alpha/beta-Hydrolases"/>
    <property type="match status" value="1"/>
</dbReference>
<feature type="chain" id="PRO_1000119458" description="Homoserine O-succinyltransferase">
    <location>
        <begin position="1"/>
        <end position="394"/>
    </location>
</feature>
<feature type="domain" description="AB hydrolase-1" evidence="1">
    <location>
        <begin position="54"/>
        <end position="368"/>
    </location>
</feature>
<feature type="active site" description="Nucleophile" evidence="1">
    <location>
        <position position="160"/>
    </location>
</feature>
<feature type="active site" evidence="1">
    <location>
        <position position="331"/>
    </location>
</feature>
<feature type="active site" evidence="1">
    <location>
        <position position="364"/>
    </location>
</feature>
<feature type="binding site" evidence="1">
    <location>
        <position position="236"/>
    </location>
    <ligand>
        <name>substrate</name>
    </ligand>
</feature>
<feature type="binding site" evidence="1">
    <location>
        <position position="365"/>
    </location>
    <ligand>
        <name>substrate</name>
    </ligand>
</feature>
<feature type="site" description="Important for acyl-CoA specificity" evidence="1">
    <location>
        <position position="333"/>
    </location>
</feature>
<comment type="function">
    <text evidence="1">Transfers a succinyl group from succinyl-CoA to L-homoserine, forming succinyl-L-homoserine.</text>
</comment>
<comment type="catalytic activity">
    <reaction evidence="1">
        <text>L-homoserine + succinyl-CoA = O-succinyl-L-homoserine + CoA</text>
        <dbReference type="Rhea" id="RHEA:22008"/>
        <dbReference type="ChEBI" id="CHEBI:57287"/>
        <dbReference type="ChEBI" id="CHEBI:57292"/>
        <dbReference type="ChEBI" id="CHEBI:57476"/>
        <dbReference type="ChEBI" id="CHEBI:57661"/>
        <dbReference type="EC" id="2.3.1.46"/>
    </reaction>
</comment>
<comment type="pathway">
    <text evidence="1">Amino-acid biosynthesis; L-methionine biosynthesis via de novo pathway; O-succinyl-L-homoserine from L-homoserine: step 1/1.</text>
</comment>
<comment type="subunit">
    <text evidence="1">Homodimer.</text>
</comment>
<comment type="subcellular location">
    <subcellularLocation>
        <location evidence="1">Cytoplasm</location>
    </subcellularLocation>
</comment>
<comment type="similarity">
    <text evidence="1">Belongs to the AB hydrolase superfamily. MetX family.</text>
</comment>
<protein>
    <recommendedName>
        <fullName evidence="1">Homoserine O-succinyltransferase</fullName>
        <shortName evidence="1">HST</shortName>
        <ecNumber evidence="1">2.3.1.46</ecNumber>
    </recommendedName>
    <alternativeName>
        <fullName evidence="1">Homoserine transsuccinylase</fullName>
        <shortName evidence="1">HTS</shortName>
    </alternativeName>
</protein>
<accession>A0LCI7</accession>